<evidence type="ECO:0000269" key="1">
    <source>
    </source>
</evidence>
<evidence type="ECO:0000303" key="2">
    <source>
    </source>
</evidence>
<evidence type="ECO:0000305" key="3"/>
<comment type="subcellular location">
    <subcellularLocation>
        <location evidence="1">Secreted</location>
        <location evidence="1">Cell wall</location>
    </subcellularLocation>
</comment>
<keyword id="KW-0134">Cell wall</keyword>
<keyword id="KW-0903">Direct protein sequencing</keyword>
<keyword id="KW-0964">Secreted</keyword>
<feature type="chain" id="PRO_0000326446" description="Unknown protein 4">
    <location>
        <begin position="1" status="less than"/>
        <end position="11" status="greater than"/>
    </location>
</feature>
<feature type="unsure residue" description="L or I">
    <location>
        <position position="10"/>
    </location>
</feature>
<feature type="non-terminal residue" evidence="2">
    <location>
        <position position="1"/>
    </location>
</feature>
<feature type="non-terminal residue" evidence="2">
    <location>
        <position position="11"/>
    </location>
</feature>
<dbReference type="GO" id="GO:0005576">
    <property type="term" value="C:extracellular region"/>
    <property type="evidence" value="ECO:0007669"/>
    <property type="project" value="UniProtKB-KW"/>
</dbReference>
<sequence length="11" mass="1231">VSGTSYADYLR</sequence>
<proteinExistence type="evidence at protein level"/>
<accession>P85488</accession>
<organism>
    <name type="scientific">Pinus halepensis</name>
    <name type="common">Aleppo pine</name>
    <dbReference type="NCBI Taxonomy" id="71633"/>
    <lineage>
        <taxon>Eukaryota</taxon>
        <taxon>Viridiplantae</taxon>
        <taxon>Streptophyta</taxon>
        <taxon>Embryophyta</taxon>
        <taxon>Tracheophyta</taxon>
        <taxon>Spermatophyta</taxon>
        <taxon>Pinopsida</taxon>
        <taxon>Pinidae</taxon>
        <taxon>Conifers I</taxon>
        <taxon>Pinales</taxon>
        <taxon>Pinaceae</taxon>
        <taxon>Pinus</taxon>
        <taxon>Pinus subgen. Pinus</taxon>
    </lineage>
</organism>
<reference evidence="3" key="1">
    <citation type="journal article" date="2009" name="J. Plant Physiol.">
        <title>Analysis of the soluble cell wall proteome of gymnosperms.</title>
        <authorList>
            <person name="Uzal E.N."/>
            <person name="Gomez-Ros L.V."/>
            <person name="Hernandez J.A."/>
            <person name="Pedreno M.A."/>
            <person name="Cuello J."/>
            <person name="Ros Barcelo A."/>
        </authorList>
    </citation>
    <scope>PROTEIN SEQUENCE</scope>
    <scope>SUBCELLULAR LOCATION</scope>
    <source>
        <strain evidence="1">PC-801</strain>
        <tissue evidence="1">Callus</tissue>
    </source>
</reference>
<protein>
    <recommendedName>
        <fullName>Unknown protein 4</fullName>
    </recommendedName>
</protein>
<name>UP04_PINHA</name>